<feature type="chain" id="PRO_0000162100" description="tRNA-dihydrouridine synthase B">
    <location>
        <begin position="1"/>
        <end position="321"/>
    </location>
</feature>
<feature type="active site" description="Proton donor" evidence="1">
    <location>
        <position position="100"/>
    </location>
</feature>
<feature type="binding site" evidence="1">
    <location>
        <begin position="16"/>
        <end position="18"/>
    </location>
    <ligand>
        <name>FMN</name>
        <dbReference type="ChEBI" id="CHEBI:58210"/>
    </ligand>
</feature>
<feature type="binding site" evidence="1">
    <location>
        <position position="70"/>
    </location>
    <ligand>
        <name>FMN</name>
        <dbReference type="ChEBI" id="CHEBI:58210"/>
    </ligand>
</feature>
<feature type="binding site" evidence="1">
    <location>
        <position position="139"/>
    </location>
    <ligand>
        <name>FMN</name>
        <dbReference type="ChEBI" id="CHEBI:58210"/>
    </ligand>
</feature>
<feature type="binding site" evidence="1">
    <location>
        <begin position="200"/>
        <end position="202"/>
    </location>
    <ligand>
        <name>FMN</name>
        <dbReference type="ChEBI" id="CHEBI:58210"/>
    </ligand>
</feature>
<feature type="binding site" evidence="1">
    <location>
        <begin position="224"/>
        <end position="225"/>
    </location>
    <ligand>
        <name>FMN</name>
        <dbReference type="ChEBI" id="CHEBI:58210"/>
    </ligand>
</feature>
<comment type="function">
    <text evidence="1">Catalyzes the synthesis of 5,6-dihydrouridine (D), a modified base found in the D-loop of most tRNAs, via the reduction of the C5-C6 double bond in target uridines.</text>
</comment>
<comment type="catalytic activity">
    <reaction evidence="1">
        <text>a 5,6-dihydrouridine in tRNA + NAD(+) = a uridine in tRNA + NADH + H(+)</text>
        <dbReference type="Rhea" id="RHEA:54452"/>
        <dbReference type="Rhea" id="RHEA-COMP:13339"/>
        <dbReference type="Rhea" id="RHEA-COMP:13887"/>
        <dbReference type="ChEBI" id="CHEBI:15378"/>
        <dbReference type="ChEBI" id="CHEBI:57540"/>
        <dbReference type="ChEBI" id="CHEBI:57945"/>
        <dbReference type="ChEBI" id="CHEBI:65315"/>
        <dbReference type="ChEBI" id="CHEBI:74443"/>
    </reaction>
</comment>
<comment type="catalytic activity">
    <reaction evidence="1">
        <text>a 5,6-dihydrouridine in tRNA + NADP(+) = a uridine in tRNA + NADPH + H(+)</text>
        <dbReference type="Rhea" id="RHEA:23624"/>
        <dbReference type="Rhea" id="RHEA-COMP:13339"/>
        <dbReference type="Rhea" id="RHEA-COMP:13887"/>
        <dbReference type="ChEBI" id="CHEBI:15378"/>
        <dbReference type="ChEBI" id="CHEBI:57783"/>
        <dbReference type="ChEBI" id="CHEBI:58349"/>
        <dbReference type="ChEBI" id="CHEBI:65315"/>
        <dbReference type="ChEBI" id="CHEBI:74443"/>
    </reaction>
</comment>
<comment type="cofactor">
    <cofactor evidence="1">
        <name>FMN</name>
        <dbReference type="ChEBI" id="CHEBI:58210"/>
    </cofactor>
</comment>
<comment type="similarity">
    <text evidence="1">Belongs to the Dus family. DusB subfamily.</text>
</comment>
<comment type="sequence caution" evidence="2">
    <conflict type="erroneous initiation">
        <sequence resource="EMBL-CDS" id="AAN44762"/>
    </conflict>
    <text>Truncated N-terminus.</text>
</comment>
<comment type="sequence caution" evidence="2">
    <conflict type="erroneous initiation">
        <sequence resource="EMBL-CDS" id="AAP18573"/>
    </conflict>
    <text>Truncated N-terminus.</text>
</comment>
<proteinExistence type="inferred from homology"/>
<dbReference type="EC" id="1.3.1.-" evidence="1"/>
<dbReference type="EMBL" id="AE005674">
    <property type="protein sequence ID" value="AAN44762.2"/>
    <property type="status" value="ALT_INIT"/>
    <property type="molecule type" value="Genomic_DNA"/>
</dbReference>
<dbReference type="EMBL" id="AE014073">
    <property type="protein sequence ID" value="AAP18573.1"/>
    <property type="status" value="ALT_INIT"/>
    <property type="molecule type" value="Genomic_DNA"/>
</dbReference>
<dbReference type="RefSeq" id="WP_001219649.1">
    <property type="nucleotide sequence ID" value="NZ_WPGW01000026.1"/>
</dbReference>
<dbReference type="SMR" id="Q83PZ5"/>
<dbReference type="STRING" id="198214.SF3298"/>
<dbReference type="PaxDb" id="198214-SF3298"/>
<dbReference type="KEGG" id="sfl:SF3298"/>
<dbReference type="KEGG" id="sfx:S3515"/>
<dbReference type="PATRIC" id="fig|198214.7.peg.3906"/>
<dbReference type="HOGENOM" id="CLU_013299_0_1_6"/>
<dbReference type="Proteomes" id="UP000001006">
    <property type="component" value="Chromosome"/>
</dbReference>
<dbReference type="Proteomes" id="UP000002673">
    <property type="component" value="Chromosome"/>
</dbReference>
<dbReference type="GO" id="GO:0050660">
    <property type="term" value="F:flavin adenine dinucleotide binding"/>
    <property type="evidence" value="ECO:0007669"/>
    <property type="project" value="InterPro"/>
</dbReference>
<dbReference type="GO" id="GO:0010181">
    <property type="term" value="F:FMN binding"/>
    <property type="evidence" value="ECO:0007669"/>
    <property type="project" value="UniProtKB-UniRule"/>
</dbReference>
<dbReference type="GO" id="GO:0000049">
    <property type="term" value="F:tRNA binding"/>
    <property type="evidence" value="ECO:0007669"/>
    <property type="project" value="UniProtKB-UniRule"/>
</dbReference>
<dbReference type="GO" id="GO:0017150">
    <property type="term" value="F:tRNA dihydrouridine synthase activity"/>
    <property type="evidence" value="ECO:0007669"/>
    <property type="project" value="UniProtKB-UniRule"/>
</dbReference>
<dbReference type="CDD" id="cd02801">
    <property type="entry name" value="DUS_like_FMN"/>
    <property type="match status" value="1"/>
</dbReference>
<dbReference type="FunFam" id="1.10.1200.80:FF:000001">
    <property type="entry name" value="tRNA-dihydrouridine synthase B"/>
    <property type="match status" value="1"/>
</dbReference>
<dbReference type="FunFam" id="3.20.20.70:FF:000051">
    <property type="entry name" value="tRNA-dihydrouridine synthase B"/>
    <property type="match status" value="1"/>
</dbReference>
<dbReference type="Gene3D" id="3.20.20.70">
    <property type="entry name" value="Aldolase class I"/>
    <property type="match status" value="1"/>
</dbReference>
<dbReference type="Gene3D" id="1.10.1200.80">
    <property type="entry name" value="Putative flavin oxidoreducatase, domain 2"/>
    <property type="match status" value="1"/>
</dbReference>
<dbReference type="HAMAP" id="MF_02042">
    <property type="entry name" value="DusB_subfam"/>
    <property type="match status" value="1"/>
</dbReference>
<dbReference type="InterPro" id="IPR013785">
    <property type="entry name" value="Aldolase_TIM"/>
</dbReference>
<dbReference type="InterPro" id="IPR035587">
    <property type="entry name" value="DUS-like_FMN-bd"/>
</dbReference>
<dbReference type="InterPro" id="IPR001269">
    <property type="entry name" value="DUS_fam"/>
</dbReference>
<dbReference type="InterPro" id="IPR032887">
    <property type="entry name" value="DusB"/>
</dbReference>
<dbReference type="InterPro" id="IPR004652">
    <property type="entry name" value="DusB-like"/>
</dbReference>
<dbReference type="InterPro" id="IPR024036">
    <property type="entry name" value="tRNA-dHydroUridine_Synthase_C"/>
</dbReference>
<dbReference type="InterPro" id="IPR018517">
    <property type="entry name" value="tRNA_hU_synthase_CS"/>
</dbReference>
<dbReference type="NCBIfam" id="TIGR00737">
    <property type="entry name" value="nifR3_yhdG"/>
    <property type="match status" value="1"/>
</dbReference>
<dbReference type="PANTHER" id="PTHR45846">
    <property type="entry name" value="TRNA-DIHYDROURIDINE(47) SYNTHASE [NAD(P)(+)]-LIKE"/>
    <property type="match status" value="1"/>
</dbReference>
<dbReference type="PANTHER" id="PTHR45846:SF1">
    <property type="entry name" value="TRNA-DIHYDROURIDINE(47) SYNTHASE [NAD(P)(+)]-LIKE"/>
    <property type="match status" value="1"/>
</dbReference>
<dbReference type="Pfam" id="PF01207">
    <property type="entry name" value="Dus"/>
    <property type="match status" value="1"/>
</dbReference>
<dbReference type="PIRSF" id="PIRSF006621">
    <property type="entry name" value="Dus"/>
    <property type="match status" value="1"/>
</dbReference>
<dbReference type="SUPFAM" id="SSF51395">
    <property type="entry name" value="FMN-linked oxidoreductases"/>
    <property type="match status" value="1"/>
</dbReference>
<dbReference type="PROSITE" id="PS01136">
    <property type="entry name" value="UPF0034"/>
    <property type="match status" value="1"/>
</dbReference>
<reference key="1">
    <citation type="journal article" date="2002" name="Nucleic Acids Res.">
        <title>Genome sequence of Shigella flexneri 2a: insights into pathogenicity through comparison with genomes of Escherichia coli K12 and O157.</title>
        <authorList>
            <person name="Jin Q."/>
            <person name="Yuan Z."/>
            <person name="Xu J."/>
            <person name="Wang Y."/>
            <person name="Shen Y."/>
            <person name="Lu W."/>
            <person name="Wang J."/>
            <person name="Liu H."/>
            <person name="Yang J."/>
            <person name="Yang F."/>
            <person name="Zhang X."/>
            <person name="Zhang J."/>
            <person name="Yang G."/>
            <person name="Wu H."/>
            <person name="Qu D."/>
            <person name="Dong J."/>
            <person name="Sun L."/>
            <person name="Xue Y."/>
            <person name="Zhao A."/>
            <person name="Gao Y."/>
            <person name="Zhu J."/>
            <person name="Kan B."/>
            <person name="Ding K."/>
            <person name="Chen S."/>
            <person name="Cheng H."/>
            <person name="Yao Z."/>
            <person name="He B."/>
            <person name="Chen R."/>
            <person name="Ma D."/>
            <person name="Qiang B."/>
            <person name="Wen Y."/>
            <person name="Hou Y."/>
            <person name="Yu J."/>
        </authorList>
    </citation>
    <scope>NUCLEOTIDE SEQUENCE [LARGE SCALE GENOMIC DNA]</scope>
    <source>
        <strain>301 / Serotype 2a</strain>
    </source>
</reference>
<reference key="2">
    <citation type="journal article" date="2003" name="Infect. Immun.">
        <title>Complete genome sequence and comparative genomics of Shigella flexneri serotype 2a strain 2457T.</title>
        <authorList>
            <person name="Wei J."/>
            <person name="Goldberg M.B."/>
            <person name="Burland V."/>
            <person name="Venkatesan M.M."/>
            <person name="Deng W."/>
            <person name="Fournier G."/>
            <person name="Mayhew G.F."/>
            <person name="Plunkett G. III"/>
            <person name="Rose D.J."/>
            <person name="Darling A."/>
            <person name="Mau B."/>
            <person name="Perna N.T."/>
            <person name="Payne S.M."/>
            <person name="Runyen-Janecky L.J."/>
            <person name="Zhou S."/>
            <person name="Schwartz D.C."/>
            <person name="Blattner F.R."/>
        </authorList>
    </citation>
    <scope>NUCLEOTIDE SEQUENCE [LARGE SCALE GENOMIC DNA]</scope>
    <source>
        <strain>ATCC 700930 / 2457T / Serotype 2a</strain>
    </source>
</reference>
<sequence>MRIGQYQLRNRLIAAPMAGITDRPFRTLCYEMGAGLTVSEMMSSNPQVWESDKSRLRMVHIDEPGIRTVQIAGSAPKEMADAARINVESGAQIIDINMGCPAKKVNRKLAGSALLQYPDVVKSILTEVVNAVDVPVTLKIRTGWAPEHRNCEEIAQLAEDCGIQALTIHGRTRACLFNGEAEYDSIRAVKQKVSIPVIANGDITDPLKARAVLDYTGADALMIGRAAQGRPWIFREIQHYLDTGELLPPLPLAEVKRLLCAHVRELHDFYGPAKGYRIARKHVSWYLQEHAPNDQFRRTFNAIEDASEQLEALEAYFENFA</sequence>
<protein>
    <recommendedName>
        <fullName evidence="1">tRNA-dihydrouridine synthase B</fullName>
        <ecNumber evidence="1">1.3.1.-</ecNumber>
    </recommendedName>
</protein>
<organism>
    <name type="scientific">Shigella flexneri</name>
    <dbReference type="NCBI Taxonomy" id="623"/>
    <lineage>
        <taxon>Bacteria</taxon>
        <taxon>Pseudomonadati</taxon>
        <taxon>Pseudomonadota</taxon>
        <taxon>Gammaproteobacteria</taxon>
        <taxon>Enterobacterales</taxon>
        <taxon>Enterobacteriaceae</taxon>
        <taxon>Shigella</taxon>
    </lineage>
</organism>
<evidence type="ECO:0000255" key="1">
    <source>
        <dbReference type="HAMAP-Rule" id="MF_02042"/>
    </source>
</evidence>
<evidence type="ECO:0000305" key="2"/>
<gene>
    <name evidence="1" type="primary">dusB</name>
    <name type="ordered locus">SF3298</name>
    <name type="ordered locus">S3515</name>
</gene>
<keyword id="KW-0285">Flavoprotein</keyword>
<keyword id="KW-0288">FMN</keyword>
<keyword id="KW-0521">NADP</keyword>
<keyword id="KW-0560">Oxidoreductase</keyword>
<keyword id="KW-1185">Reference proteome</keyword>
<keyword id="KW-0694">RNA-binding</keyword>
<keyword id="KW-0819">tRNA processing</keyword>
<keyword id="KW-0820">tRNA-binding</keyword>
<name>DUSB_SHIFL</name>
<accession>Q83PZ5</accession>
<accession>Q7UBE2</accession>